<comment type="function">
    <text evidence="1">This protein binds to 23S rRNA in the presence of protein L20.</text>
</comment>
<comment type="subunit">
    <text evidence="1">Part of the 50S ribosomal subunit. Contacts protein L20.</text>
</comment>
<comment type="similarity">
    <text evidence="1">Belongs to the bacterial ribosomal protein bL21 family.</text>
</comment>
<gene>
    <name evidence="1" type="primary">rplU</name>
    <name type="synonym">rl21</name>
    <name type="ordered locus">CT_420</name>
</gene>
<name>RL21_CHLTR</name>
<organism>
    <name type="scientific">Chlamydia trachomatis serovar D (strain ATCC VR-885 / DSM 19411 / UW-3/Cx)</name>
    <dbReference type="NCBI Taxonomy" id="272561"/>
    <lineage>
        <taxon>Bacteria</taxon>
        <taxon>Pseudomonadati</taxon>
        <taxon>Chlamydiota</taxon>
        <taxon>Chlamydiia</taxon>
        <taxon>Chlamydiales</taxon>
        <taxon>Chlamydiaceae</taxon>
        <taxon>Chlamydia/Chlamydophila group</taxon>
        <taxon>Chlamydia</taxon>
    </lineage>
</organism>
<feature type="chain" id="PRO_0000180997" description="Large ribosomal subunit protein bL21">
    <location>
        <begin position="1"/>
        <end position="107"/>
    </location>
</feature>
<dbReference type="EMBL" id="AE001273">
    <property type="protein sequence ID" value="AAC68017.1"/>
    <property type="molecule type" value="Genomic_DNA"/>
</dbReference>
<dbReference type="PIR" id="G71517">
    <property type="entry name" value="G71517"/>
</dbReference>
<dbReference type="RefSeq" id="NP_219930.1">
    <property type="nucleotide sequence ID" value="NC_000117.1"/>
</dbReference>
<dbReference type="RefSeq" id="WP_009871772.1">
    <property type="nucleotide sequence ID" value="NC_000117.1"/>
</dbReference>
<dbReference type="SMR" id="O84425"/>
<dbReference type="FunCoup" id="O84425">
    <property type="interactions" value="235"/>
</dbReference>
<dbReference type="STRING" id="272561.CT_420"/>
<dbReference type="EnsemblBacteria" id="AAC68017">
    <property type="protein sequence ID" value="AAC68017"/>
    <property type="gene ID" value="CT_420"/>
</dbReference>
<dbReference type="GeneID" id="884693"/>
<dbReference type="KEGG" id="ctr:CT_420"/>
<dbReference type="PATRIC" id="fig|272561.5.peg.451"/>
<dbReference type="HOGENOM" id="CLU_061463_3_2_0"/>
<dbReference type="InParanoid" id="O84425"/>
<dbReference type="OrthoDB" id="9813334at2"/>
<dbReference type="Proteomes" id="UP000000431">
    <property type="component" value="Chromosome"/>
</dbReference>
<dbReference type="GO" id="GO:0005737">
    <property type="term" value="C:cytoplasm"/>
    <property type="evidence" value="ECO:0007669"/>
    <property type="project" value="UniProtKB-ARBA"/>
</dbReference>
<dbReference type="GO" id="GO:1990904">
    <property type="term" value="C:ribonucleoprotein complex"/>
    <property type="evidence" value="ECO:0007669"/>
    <property type="project" value="UniProtKB-KW"/>
</dbReference>
<dbReference type="GO" id="GO:0005840">
    <property type="term" value="C:ribosome"/>
    <property type="evidence" value="ECO:0007669"/>
    <property type="project" value="UniProtKB-KW"/>
</dbReference>
<dbReference type="GO" id="GO:0019843">
    <property type="term" value="F:rRNA binding"/>
    <property type="evidence" value="ECO:0007669"/>
    <property type="project" value="UniProtKB-UniRule"/>
</dbReference>
<dbReference type="GO" id="GO:0003735">
    <property type="term" value="F:structural constituent of ribosome"/>
    <property type="evidence" value="ECO:0000318"/>
    <property type="project" value="GO_Central"/>
</dbReference>
<dbReference type="GO" id="GO:0006412">
    <property type="term" value="P:translation"/>
    <property type="evidence" value="ECO:0007669"/>
    <property type="project" value="UniProtKB-UniRule"/>
</dbReference>
<dbReference type="HAMAP" id="MF_01363">
    <property type="entry name" value="Ribosomal_bL21"/>
    <property type="match status" value="1"/>
</dbReference>
<dbReference type="InterPro" id="IPR028909">
    <property type="entry name" value="bL21-like"/>
</dbReference>
<dbReference type="InterPro" id="IPR036164">
    <property type="entry name" value="bL21-like_sf"/>
</dbReference>
<dbReference type="InterPro" id="IPR001787">
    <property type="entry name" value="Ribosomal_bL21"/>
</dbReference>
<dbReference type="InterPro" id="IPR018258">
    <property type="entry name" value="Ribosomal_bL21_CS"/>
</dbReference>
<dbReference type="NCBIfam" id="TIGR00061">
    <property type="entry name" value="L21"/>
    <property type="match status" value="1"/>
</dbReference>
<dbReference type="PANTHER" id="PTHR21349">
    <property type="entry name" value="50S RIBOSOMAL PROTEIN L21"/>
    <property type="match status" value="1"/>
</dbReference>
<dbReference type="PANTHER" id="PTHR21349:SF0">
    <property type="entry name" value="LARGE RIBOSOMAL SUBUNIT PROTEIN BL21M"/>
    <property type="match status" value="1"/>
</dbReference>
<dbReference type="Pfam" id="PF00829">
    <property type="entry name" value="Ribosomal_L21p"/>
    <property type="match status" value="1"/>
</dbReference>
<dbReference type="SUPFAM" id="SSF141091">
    <property type="entry name" value="L21p-like"/>
    <property type="match status" value="1"/>
</dbReference>
<dbReference type="PROSITE" id="PS01169">
    <property type="entry name" value="RIBOSOMAL_L21"/>
    <property type="match status" value="1"/>
</dbReference>
<proteinExistence type="inferred from homology"/>
<keyword id="KW-1185">Reference proteome</keyword>
<keyword id="KW-0687">Ribonucleoprotein</keyword>
<keyword id="KW-0689">Ribosomal protein</keyword>
<keyword id="KW-0694">RNA-binding</keyword>
<keyword id="KW-0699">rRNA-binding</keyword>
<sequence length="107" mass="12163">MEPYAVIQTGNKQYQVRKGDVIDVELLDGISEENKEVLFQDVLFTFDGEKASVGAPTVGNAVVKGELVSFVRGEKVVAYKYKKRKNYHKKIGHRQNYLRVKISDLVM</sequence>
<accession>O84425</accession>
<protein>
    <recommendedName>
        <fullName evidence="1">Large ribosomal subunit protein bL21</fullName>
    </recommendedName>
    <alternativeName>
        <fullName evidence="2">50S ribosomal protein L21</fullName>
    </alternativeName>
</protein>
<reference key="1">
    <citation type="journal article" date="1998" name="Science">
        <title>Genome sequence of an obligate intracellular pathogen of humans: Chlamydia trachomatis.</title>
        <authorList>
            <person name="Stephens R.S."/>
            <person name="Kalman S."/>
            <person name="Lammel C.J."/>
            <person name="Fan J."/>
            <person name="Marathe R."/>
            <person name="Aravind L."/>
            <person name="Mitchell W.P."/>
            <person name="Olinger L."/>
            <person name="Tatusov R.L."/>
            <person name="Zhao Q."/>
            <person name="Koonin E.V."/>
            <person name="Davis R.W."/>
        </authorList>
    </citation>
    <scope>NUCLEOTIDE SEQUENCE [LARGE SCALE GENOMIC DNA]</scope>
    <source>
        <strain>ATCC VR-885 / DSM 19411 / UW-3/Cx</strain>
    </source>
</reference>
<evidence type="ECO:0000255" key="1">
    <source>
        <dbReference type="HAMAP-Rule" id="MF_01363"/>
    </source>
</evidence>
<evidence type="ECO:0000305" key="2"/>